<comment type="function">
    <text>Light-harvesting photosynthetic tetrapyrrole chromophore-protein from the phycobiliprotein complex.</text>
</comment>
<comment type="subunit">
    <text evidence="2">Heterododecamer of 6 alpha and 6 beta chains. The basic functional unit of phycobiliproteins is a ring-shaped hexamer formed from two back-to-back trimers contacting via the alpha chain subunits. The trimers are composed of alpha/beta subunit heterodimers arranged around a three-fold axis of symmetry. The phycoerythrins also contain a gamma subunit which is located in the center of the hexamer.</text>
</comment>
<comment type="subcellular location">
    <subcellularLocation>
        <location evidence="1">Plastid</location>
        <location evidence="1">Chloroplast thylakoid membrane</location>
        <topology evidence="1">Peripheral membrane protein</topology>
        <orientation evidence="1">Stromal side</orientation>
    </subcellularLocation>
    <text evidence="1">Forms the periphery of the phycobilisome rod.</text>
</comment>
<comment type="PTM">
    <text>Contains two covalently linked phycoerythrobilin chromophores and one covalently linked phycourobilin chromophore.</text>
</comment>
<comment type="miscellaneous">
    <text>The light-harvesting antenna system in red algae and cyanobacteria is formed of phycobilisomes. These are composed of the phycobiliproteins phycoerythrin (CPE), phycocyanin (CPC) and allophycocyanin (APC). Cyanobacteria also contain phycoerythrocyanin (PCC). The phycobiliproteins all share the same subunit composition and organization with variations in the covalently bound open-chain tetrapyrrole chromophores. The phycobiliprotein complexes are arranged sequentially in antenna complexes linked by linker proteins with CPE at the periphery, CPC in the middle and APC at the core feeding to the photosynthetic reaction center.</text>
</comment>
<comment type="similarity">
    <text evidence="3">Belongs to the phycobiliprotein family.</text>
</comment>
<evidence type="ECO:0000250" key="1"/>
<evidence type="ECO:0000269" key="2">
    <source>
    </source>
</evidence>
<evidence type="ECO:0000305" key="3"/>
<evidence type="ECO:0007829" key="4">
    <source>
        <dbReference type="PDB" id="1B8D"/>
    </source>
</evidence>
<protein>
    <recommendedName>
        <fullName>R-phycoerythrin beta chain</fullName>
    </recommendedName>
</protein>
<reference key="1">
    <citation type="journal article" date="1999" name="J. Struct. Biol.">
        <title>Crystal structure of a phycourobilin-containing phycoerythrin at 1.90-A resolution.</title>
        <authorList>
            <person name="Ritter S."/>
            <person name="Hiller R.G."/>
            <person name="Wrench P.M."/>
            <person name="Welte W."/>
            <person name="Diederichs K."/>
        </authorList>
    </citation>
    <scope>NUCLEOTIDE SEQUENCE [GENOMIC DNA]</scope>
    <scope>X-RAY CRYSTALLOGRAPHY (1.9 ANGSTROMS) IN COMPLEX WITH PHYCOERYTHROBILIN; PHYCOUROBILIN AND CPEA</scope>
    <scope>SUBUNIT</scope>
    <scope>METHYLATION AT ASN-72</scope>
</reference>
<name>PHEB_GRIMO</name>
<accession>O36004</accession>
<organism>
    <name type="scientific">Griffithsia monilis</name>
    <name type="common">Red alga</name>
    <dbReference type="NCBI Taxonomy" id="42003"/>
    <lineage>
        <taxon>Eukaryota</taxon>
        <taxon>Rhodophyta</taxon>
        <taxon>Florideophyceae</taxon>
        <taxon>Rhodymeniophycidae</taxon>
        <taxon>Ceramiales</taxon>
        <taxon>Ceramiaceae</taxon>
        <taxon>Griffithsia</taxon>
    </lineage>
</organism>
<sequence>MLDAFSRVVVTSDAKAAYVGGSDLQSLKSFINDGNKRLDAVNYIVSNASCIVSDAVSGMICENPGLIAPGGNCYTNRRMAACLRDGEIILRYVSYALLAGDSSVLDDRCLNGLKETYIALGVPTASSSRAVSIMKATATAFITNTASGRKVEVAAGDCQALQAEAASYFDKVGSSID</sequence>
<proteinExistence type="evidence at protein level"/>
<keyword id="KW-0002">3D-structure</keyword>
<keyword id="KW-0042">Antenna complex</keyword>
<keyword id="KW-0089">Bile pigment</keyword>
<keyword id="KW-0150">Chloroplast</keyword>
<keyword id="KW-0157">Chromophore</keyword>
<keyword id="KW-0249">Electron transport</keyword>
<keyword id="KW-0472">Membrane</keyword>
<keyword id="KW-0488">Methylation</keyword>
<keyword id="KW-0602">Photosynthesis</keyword>
<keyword id="KW-0605">Phycobilisome</keyword>
<keyword id="KW-0934">Plastid</keyword>
<keyword id="KW-0793">Thylakoid</keyword>
<keyword id="KW-0813">Transport</keyword>
<dbReference type="EMBL" id="Z98528">
    <property type="protein sequence ID" value="CAB11028.1"/>
    <property type="molecule type" value="Genomic_DNA"/>
</dbReference>
<dbReference type="PDB" id="1B8D">
    <property type="method" value="X-ray"/>
    <property type="resolution" value="1.90 A"/>
    <property type="chains" value="B/L=1-177"/>
</dbReference>
<dbReference type="PDBsum" id="1B8D"/>
<dbReference type="SMR" id="O36004"/>
<dbReference type="iPTMnet" id="O36004"/>
<dbReference type="EvolutionaryTrace" id="O36004"/>
<dbReference type="GO" id="GO:0009535">
    <property type="term" value="C:chloroplast thylakoid membrane"/>
    <property type="evidence" value="ECO:0007669"/>
    <property type="project" value="UniProtKB-SubCell"/>
</dbReference>
<dbReference type="GO" id="GO:0030089">
    <property type="term" value="C:phycobilisome"/>
    <property type="evidence" value="ECO:0007669"/>
    <property type="project" value="UniProtKB-KW"/>
</dbReference>
<dbReference type="GO" id="GO:0015979">
    <property type="term" value="P:photosynthesis"/>
    <property type="evidence" value="ECO:0007669"/>
    <property type="project" value="UniProtKB-KW"/>
</dbReference>
<dbReference type="CDD" id="cd14767">
    <property type="entry name" value="PE_beta-like"/>
    <property type="match status" value="1"/>
</dbReference>
<dbReference type="Gene3D" id="1.10.490.20">
    <property type="entry name" value="Phycocyanins"/>
    <property type="match status" value="1"/>
</dbReference>
<dbReference type="InterPro" id="IPR009050">
    <property type="entry name" value="Globin-like_sf"/>
</dbReference>
<dbReference type="InterPro" id="IPR012128">
    <property type="entry name" value="Phycobilisome_asu/bsu"/>
</dbReference>
<dbReference type="InterPro" id="IPR038719">
    <property type="entry name" value="Phycobilisome_asu/bsu_sf"/>
</dbReference>
<dbReference type="PANTHER" id="PTHR34011:SF7">
    <property type="entry name" value="C-PHYCOCYANIN BETA SUBUNIT"/>
    <property type="match status" value="1"/>
</dbReference>
<dbReference type="PANTHER" id="PTHR34011">
    <property type="entry name" value="PHYCOBILISOME 32.1 KDA LINKER POLYPEPTIDE, PHYCOCYANIN-ASSOCIATED, ROD 2-RELATED"/>
    <property type="match status" value="1"/>
</dbReference>
<dbReference type="Pfam" id="PF00502">
    <property type="entry name" value="Phycobilisome"/>
    <property type="match status" value="1"/>
</dbReference>
<dbReference type="PIRSF" id="PIRSF000081">
    <property type="entry name" value="Phycocyanin"/>
    <property type="match status" value="1"/>
</dbReference>
<dbReference type="SUPFAM" id="SSF46458">
    <property type="entry name" value="Globin-like"/>
    <property type="match status" value="1"/>
</dbReference>
<feature type="chain" id="PRO_0000199191" description="R-phycoerythrin beta chain">
    <location>
        <begin position="1"/>
        <end position="177"/>
    </location>
</feature>
<feature type="binding site" evidence="2">
    <location>
        <position position="35"/>
    </location>
    <ligand>
        <name>(2R,3E)-phycoerythrobilin</name>
        <dbReference type="ChEBI" id="CHEBI:85276"/>
        <label>2</label>
    </ligand>
</feature>
<feature type="binding site" evidence="2">
    <location>
        <position position="39"/>
    </location>
    <ligand>
        <name>(2R,3E)-phycoerythrobilin</name>
        <dbReference type="ChEBI" id="CHEBI:85276"/>
        <label>2</label>
    </ligand>
</feature>
<feature type="binding site" description="covalent" evidence="2">
    <location>
        <position position="50"/>
    </location>
    <ligand>
        <name>phycourobilin</name>
        <dbReference type="ChEBI" id="CHEBI:189062"/>
    </ligand>
</feature>
<feature type="binding site" evidence="2">
    <location>
        <position position="54"/>
    </location>
    <ligand>
        <name>phycourobilin</name>
        <dbReference type="ChEBI" id="CHEBI:189062"/>
    </ligand>
</feature>
<feature type="binding site" description="covalent" evidence="2">
    <location>
        <position position="61"/>
    </location>
    <ligand>
        <name>phycourobilin</name>
        <dbReference type="ChEBI" id="CHEBI:189062"/>
    </ligand>
</feature>
<feature type="binding site" evidence="2">
    <location>
        <position position="72"/>
    </location>
    <ligand>
        <name>(2R,3E)-phycoerythrobilin</name>
        <dbReference type="ChEBI" id="CHEBI:85276"/>
        <label>1</label>
    </ligand>
</feature>
<feature type="binding site">
    <location>
        <begin position="77"/>
        <end position="78"/>
    </location>
    <ligand>
        <name>(2R,3E)-phycoerythrobilin</name>
        <dbReference type="ChEBI" id="CHEBI:85276"/>
        <label>1</label>
    </ligand>
</feature>
<feature type="binding site" description="covalent" evidence="2">
    <location>
        <position position="82"/>
    </location>
    <ligand>
        <name>(2R,3E)-phycoerythrobilin</name>
        <dbReference type="ChEBI" id="CHEBI:85276"/>
        <label>1</label>
    </ligand>
</feature>
<feature type="binding site">
    <location>
        <begin position="84"/>
        <end position="85"/>
    </location>
    <ligand>
        <name>(2R,3E)-phycoerythrobilin</name>
        <dbReference type="ChEBI" id="CHEBI:85276"/>
        <label>1</label>
    </ligand>
</feature>
<feature type="binding site">
    <location>
        <begin position="147"/>
        <end position="148"/>
    </location>
    <ligand>
        <name>phycourobilin</name>
        <dbReference type="ChEBI" id="CHEBI:189062"/>
    </ligand>
</feature>
<feature type="binding site" description="covalent" evidence="2">
    <location>
        <position position="158"/>
    </location>
    <ligand>
        <name>(2R,3E)-phycoerythrobilin</name>
        <dbReference type="ChEBI" id="CHEBI:85276"/>
        <label>2</label>
    </ligand>
</feature>
<feature type="modified residue" description="N4-methylasparagine" evidence="2">
    <location>
        <position position="72"/>
    </location>
</feature>
<feature type="helix" evidence="4">
    <location>
        <begin position="4"/>
        <end position="13"/>
    </location>
</feature>
<feature type="turn" evidence="4">
    <location>
        <begin position="14"/>
        <end position="16"/>
    </location>
</feature>
<feature type="helix" evidence="4">
    <location>
        <begin position="22"/>
        <end position="32"/>
    </location>
</feature>
<feature type="helix" evidence="4">
    <location>
        <begin position="34"/>
        <end position="46"/>
    </location>
</feature>
<feature type="helix" evidence="4">
    <location>
        <begin position="48"/>
        <end position="62"/>
    </location>
</feature>
<feature type="helix" evidence="4">
    <location>
        <begin position="64"/>
        <end position="67"/>
    </location>
</feature>
<feature type="helix" evidence="4">
    <location>
        <begin position="76"/>
        <end position="99"/>
    </location>
</feature>
<feature type="helix" evidence="4">
    <location>
        <begin position="103"/>
        <end position="108"/>
    </location>
</feature>
<feature type="turn" evidence="4">
    <location>
        <begin position="109"/>
        <end position="112"/>
    </location>
</feature>
<feature type="helix" evidence="4">
    <location>
        <begin position="113"/>
        <end position="120"/>
    </location>
</feature>
<feature type="helix" evidence="4">
    <location>
        <begin position="124"/>
        <end position="142"/>
    </location>
</feature>
<feature type="helix" evidence="4">
    <location>
        <begin position="159"/>
        <end position="176"/>
    </location>
</feature>
<gene>
    <name type="primary">cpeB</name>
</gene>
<geneLocation type="chloroplast"/>